<accession>A8GT43</accession>
<evidence type="ECO:0000255" key="1">
    <source>
        <dbReference type="HAMAP-Rule" id="MF_00500"/>
    </source>
</evidence>
<evidence type="ECO:0000305" key="2"/>
<proteinExistence type="inferred from homology"/>
<gene>
    <name evidence="1" type="primary">rpsT</name>
    <name type="ordered locus">A1G_05425</name>
</gene>
<reference key="1">
    <citation type="submission" date="2007-09" db="EMBL/GenBank/DDBJ databases">
        <title>Complete genome sequence of Rickettsia rickettsii.</title>
        <authorList>
            <person name="Madan A."/>
            <person name="Fahey J."/>
            <person name="Helton E."/>
            <person name="Ketteman M."/>
            <person name="Madan A."/>
            <person name="Rodrigues S."/>
            <person name="Sanchez A."/>
            <person name="Dasch G."/>
            <person name="Eremeeva M."/>
        </authorList>
    </citation>
    <scope>NUCLEOTIDE SEQUENCE [LARGE SCALE GENOMIC DNA]</scope>
    <source>
        <strain>Sheila Smith</strain>
    </source>
</reference>
<name>RS20_RICRS</name>
<sequence length="92" mass="10223">MANHSSAKKAARQTVKRTLINKKRSSAIKTFIKKVVHEISLGNKENANIALSVAQSKIMQGVKKNIIKLNTASRKISRLSRQIKSLKVNNTL</sequence>
<protein>
    <recommendedName>
        <fullName evidence="1">Small ribosomal subunit protein bS20</fullName>
    </recommendedName>
    <alternativeName>
        <fullName evidence="2">30S ribosomal protein S20</fullName>
    </alternativeName>
</protein>
<comment type="function">
    <text evidence="1">Binds directly to 16S ribosomal RNA.</text>
</comment>
<comment type="similarity">
    <text evidence="1">Belongs to the bacterial ribosomal protein bS20 family.</text>
</comment>
<keyword id="KW-0687">Ribonucleoprotein</keyword>
<keyword id="KW-0689">Ribosomal protein</keyword>
<keyword id="KW-0694">RNA-binding</keyword>
<keyword id="KW-0699">rRNA-binding</keyword>
<feature type="chain" id="PRO_1000014644" description="Small ribosomal subunit protein bS20">
    <location>
        <begin position="1"/>
        <end position="92"/>
    </location>
</feature>
<organism>
    <name type="scientific">Rickettsia rickettsii (strain Sheila Smith)</name>
    <dbReference type="NCBI Taxonomy" id="392021"/>
    <lineage>
        <taxon>Bacteria</taxon>
        <taxon>Pseudomonadati</taxon>
        <taxon>Pseudomonadota</taxon>
        <taxon>Alphaproteobacteria</taxon>
        <taxon>Rickettsiales</taxon>
        <taxon>Rickettsiaceae</taxon>
        <taxon>Rickettsieae</taxon>
        <taxon>Rickettsia</taxon>
        <taxon>spotted fever group</taxon>
    </lineage>
</organism>
<dbReference type="EMBL" id="CP000848">
    <property type="protein sequence ID" value="ABV76568.1"/>
    <property type="molecule type" value="Genomic_DNA"/>
</dbReference>
<dbReference type="RefSeq" id="WP_004997845.1">
    <property type="nucleotide sequence ID" value="NC_009882.1"/>
</dbReference>
<dbReference type="SMR" id="A8GT43"/>
<dbReference type="GeneID" id="34513753"/>
<dbReference type="GeneID" id="95361460"/>
<dbReference type="KEGG" id="rri:A1G_05425"/>
<dbReference type="HOGENOM" id="CLU_160655_3_0_5"/>
<dbReference type="Proteomes" id="UP000006832">
    <property type="component" value="Chromosome"/>
</dbReference>
<dbReference type="GO" id="GO:0015935">
    <property type="term" value="C:small ribosomal subunit"/>
    <property type="evidence" value="ECO:0007669"/>
    <property type="project" value="TreeGrafter"/>
</dbReference>
<dbReference type="GO" id="GO:0070181">
    <property type="term" value="F:small ribosomal subunit rRNA binding"/>
    <property type="evidence" value="ECO:0007669"/>
    <property type="project" value="TreeGrafter"/>
</dbReference>
<dbReference type="GO" id="GO:0003735">
    <property type="term" value="F:structural constituent of ribosome"/>
    <property type="evidence" value="ECO:0007669"/>
    <property type="project" value="InterPro"/>
</dbReference>
<dbReference type="GO" id="GO:0006412">
    <property type="term" value="P:translation"/>
    <property type="evidence" value="ECO:0007669"/>
    <property type="project" value="UniProtKB-UniRule"/>
</dbReference>
<dbReference type="Gene3D" id="1.20.58.110">
    <property type="entry name" value="Ribosomal protein S20"/>
    <property type="match status" value="1"/>
</dbReference>
<dbReference type="HAMAP" id="MF_00500">
    <property type="entry name" value="Ribosomal_bS20"/>
    <property type="match status" value="1"/>
</dbReference>
<dbReference type="InterPro" id="IPR002583">
    <property type="entry name" value="Ribosomal_bS20"/>
</dbReference>
<dbReference type="InterPro" id="IPR036510">
    <property type="entry name" value="Ribosomal_bS20_sf"/>
</dbReference>
<dbReference type="NCBIfam" id="TIGR00029">
    <property type="entry name" value="S20"/>
    <property type="match status" value="1"/>
</dbReference>
<dbReference type="PANTHER" id="PTHR33398">
    <property type="entry name" value="30S RIBOSOMAL PROTEIN S20"/>
    <property type="match status" value="1"/>
</dbReference>
<dbReference type="PANTHER" id="PTHR33398:SF1">
    <property type="entry name" value="SMALL RIBOSOMAL SUBUNIT PROTEIN BS20C"/>
    <property type="match status" value="1"/>
</dbReference>
<dbReference type="Pfam" id="PF01649">
    <property type="entry name" value="Ribosomal_S20p"/>
    <property type="match status" value="1"/>
</dbReference>
<dbReference type="SUPFAM" id="SSF46992">
    <property type="entry name" value="Ribosomal protein S20"/>
    <property type="match status" value="1"/>
</dbReference>